<sequence>MNQKVDIEALHETSINSDQPLLRLQQVSRSFMAGDREFQVLKHIDLAIHTGELVAIIGASGSGKSTLMNILGCLDHASAGSYQVNGQETRELDDDALAALRRDHFGFIFQRYHLLPHLDAVRNVEIPAIYAGTAQTTRHERAQALLTRLGLGGHLQHRPSQMSGGQQQRVSIARALMNGGQVILADEPTGALDTASGKEVMRTLLELHAAGHTVILVTHDPKVAANAERIIEVSDGEIISDRRTAQTTQPAPEAQPATPPGPAPRRLLASLGLFREAFNMAWIALISHRMRTLLTMLGIIIGITSVVSISAIGEGAKRYVLKDIQSIGSNTIDIYAGANFGDSRAKSIETLLPSDVAALNQLYYIDSATPVVGRSMLVRYRNVDVDAQLNGVSSRYFQVRNIQLAAGITFSDQDARRQAQVVVLDHNTAQRLFGPGVNPLGQVILVGKLPCTVIGVTSDHKNLFIAGNTLNLWMPYETAAGRVLGQRHLDSISVRVKDGMPSKAVEEQIKALMLQRHGTKDFFTNNLDSVMQTVQKTSRSLTLLLSLIAVISLVVGGIGVMNIMLVSVTERTREIGIRMAVGARQSDIRQQFLVEAVMVCLMGGVIGIGLSYAIGYLFTLFVQQWEMVFSLASVVTAFACSTLIGVLFGFVPARNAARLDPIEALARD</sequence>
<keyword id="KW-0067">ATP-binding</keyword>
<keyword id="KW-0997">Cell inner membrane</keyword>
<keyword id="KW-1003">Cell membrane</keyword>
<keyword id="KW-0472">Membrane</keyword>
<keyword id="KW-0547">Nucleotide-binding</keyword>
<keyword id="KW-1185">Reference proteome</keyword>
<keyword id="KW-1278">Translocase</keyword>
<keyword id="KW-0812">Transmembrane</keyword>
<keyword id="KW-1133">Transmembrane helix</keyword>
<keyword id="KW-0813">Transport</keyword>
<gene>
    <name evidence="6" type="primary">syfD</name>
    <name evidence="9" type="ordered locus">PSPTO_2832</name>
</gene>
<name>SYFD_PSESM</name>
<proteinExistence type="evidence at transcript level"/>
<accession>Q881Q1</accession>
<feature type="chain" id="PRO_0000269966" description="Probable syringafactin export ATP-binding/permease protein SyfD">
    <location>
        <begin position="1"/>
        <end position="668"/>
    </location>
</feature>
<feature type="transmembrane region" description="Helical" evidence="2">
    <location>
        <begin position="267"/>
        <end position="287"/>
    </location>
</feature>
<feature type="transmembrane region" description="Helical" evidence="2">
    <location>
        <begin position="293"/>
        <end position="313"/>
    </location>
</feature>
<feature type="transmembrane region" description="Helical" evidence="2">
    <location>
        <begin position="541"/>
        <end position="561"/>
    </location>
</feature>
<feature type="transmembrane region" description="Helical" evidence="2">
    <location>
        <begin position="602"/>
        <end position="622"/>
    </location>
</feature>
<feature type="transmembrane region" description="Helical" evidence="2">
    <location>
        <begin position="631"/>
        <end position="651"/>
    </location>
</feature>
<feature type="domain" description="ABC transporter" evidence="3">
    <location>
        <begin position="22"/>
        <end position="260"/>
    </location>
</feature>
<feature type="region of interest" description="Disordered" evidence="4">
    <location>
        <begin position="242"/>
        <end position="263"/>
    </location>
</feature>
<feature type="compositionally biased region" description="Low complexity" evidence="4">
    <location>
        <begin position="245"/>
        <end position="256"/>
    </location>
</feature>
<feature type="binding site" evidence="3">
    <location>
        <begin position="58"/>
        <end position="65"/>
    </location>
    <ligand>
        <name>ATP</name>
        <dbReference type="ChEBI" id="CHEBI:30616"/>
    </ligand>
</feature>
<reference key="1">
    <citation type="journal article" date="2003" name="Proc. Natl. Acad. Sci. U.S.A.">
        <title>The complete genome sequence of the Arabidopsis and tomato pathogen Pseudomonas syringae pv. tomato DC3000.</title>
        <authorList>
            <person name="Buell C.R."/>
            <person name="Joardar V."/>
            <person name="Lindeberg M."/>
            <person name="Selengut J."/>
            <person name="Paulsen I.T."/>
            <person name="Gwinn M.L."/>
            <person name="Dodson R.J."/>
            <person name="DeBoy R.T."/>
            <person name="Durkin A.S."/>
            <person name="Kolonay J.F."/>
            <person name="Madupu R."/>
            <person name="Daugherty S.C."/>
            <person name="Brinkac L.M."/>
            <person name="Beanan M.J."/>
            <person name="Haft D.H."/>
            <person name="Nelson W.C."/>
            <person name="Davidsen T.M."/>
            <person name="Zafar N."/>
            <person name="Zhou L."/>
            <person name="Liu J."/>
            <person name="Yuan Q."/>
            <person name="Khouri H.M."/>
            <person name="Fedorova N.B."/>
            <person name="Tran B."/>
            <person name="Russell D."/>
            <person name="Berry K.J."/>
            <person name="Utterback T.R."/>
            <person name="Van Aken S.E."/>
            <person name="Feldblyum T.V."/>
            <person name="D'Ascenzo M."/>
            <person name="Deng W.-L."/>
            <person name="Ramos A.R."/>
            <person name="Alfano J.R."/>
            <person name="Cartinhour S."/>
            <person name="Chatterjee A.K."/>
            <person name="Delaney T.P."/>
            <person name="Lazarowitz S.G."/>
            <person name="Martin G.B."/>
            <person name="Schneider D.J."/>
            <person name="Tang X."/>
            <person name="Bender C.L."/>
            <person name="White O."/>
            <person name="Fraser C.M."/>
            <person name="Collmer A."/>
        </authorList>
    </citation>
    <scope>NUCLEOTIDE SEQUENCE [LARGE SCALE GENOMIC DNA]</scope>
    <source>
        <strain>ATCC BAA-871 / DC3000</strain>
    </source>
</reference>
<reference key="2">
    <citation type="journal article" date="2007" name="J. Bacteriol.">
        <title>Identification of a biosynthetic gene cluster and the six associated lipopeptides involved in swarming motility of Pseudomonas syringae pv. tomato DC3000.</title>
        <authorList>
            <person name="Berti A.D."/>
            <person name="Greve N.J."/>
            <person name="Christensen Q.H."/>
            <person name="Thomas M.G."/>
        </authorList>
    </citation>
    <scope>FUNCTION</scope>
    <scope>GENE CLUSTER</scope>
    <source>
        <strain>ATCC BAA-871 / DC3000</strain>
    </source>
</reference>
<evidence type="ECO:0000250" key="1">
    <source>
        <dbReference type="UniProtKB" id="P75831"/>
    </source>
</evidence>
<evidence type="ECO:0000255" key="2"/>
<evidence type="ECO:0000255" key="3">
    <source>
        <dbReference type="PROSITE-ProRule" id="PRU00434"/>
    </source>
</evidence>
<evidence type="ECO:0000256" key="4">
    <source>
        <dbReference type="SAM" id="MobiDB-lite"/>
    </source>
</evidence>
<evidence type="ECO:0000269" key="5">
    <source>
    </source>
</evidence>
<evidence type="ECO:0000303" key="6">
    <source>
    </source>
</evidence>
<evidence type="ECO:0000305" key="7"/>
<evidence type="ECO:0000305" key="8">
    <source>
    </source>
</evidence>
<evidence type="ECO:0000312" key="9">
    <source>
        <dbReference type="EMBL" id="AAO56331.1"/>
    </source>
</evidence>
<organism>
    <name type="scientific">Pseudomonas syringae pv. tomato (strain ATCC BAA-871 / DC3000)</name>
    <dbReference type="NCBI Taxonomy" id="223283"/>
    <lineage>
        <taxon>Bacteria</taxon>
        <taxon>Pseudomonadati</taxon>
        <taxon>Pseudomonadota</taxon>
        <taxon>Gammaproteobacteria</taxon>
        <taxon>Pseudomonadales</taxon>
        <taxon>Pseudomonadaceae</taxon>
        <taxon>Pseudomonas</taxon>
    </lineage>
</organism>
<dbReference type="EC" id="7.6.2.-" evidence="7"/>
<dbReference type="EMBL" id="AE016853">
    <property type="protein sequence ID" value="AAO56331.1"/>
    <property type="molecule type" value="Genomic_DNA"/>
</dbReference>
<dbReference type="RefSeq" id="NP_792636.1">
    <property type="nucleotide sequence ID" value="NC_004578.1"/>
</dbReference>
<dbReference type="RefSeq" id="WP_011104221.1">
    <property type="nucleotide sequence ID" value="NC_004578.1"/>
</dbReference>
<dbReference type="SMR" id="Q881Q1"/>
<dbReference type="STRING" id="223283.PSPTO_2832"/>
<dbReference type="GeneID" id="1184486"/>
<dbReference type="KEGG" id="pst:PSPTO_2832"/>
<dbReference type="PATRIC" id="fig|223283.9.peg.2891"/>
<dbReference type="eggNOG" id="COG0577">
    <property type="taxonomic scope" value="Bacteria"/>
</dbReference>
<dbReference type="eggNOG" id="COG1136">
    <property type="taxonomic scope" value="Bacteria"/>
</dbReference>
<dbReference type="HOGENOM" id="CLU_000604_78_1_6"/>
<dbReference type="OrthoDB" id="9770036at2"/>
<dbReference type="PhylomeDB" id="Q881Q1"/>
<dbReference type="Proteomes" id="UP000002515">
    <property type="component" value="Chromosome"/>
</dbReference>
<dbReference type="GO" id="GO:0005886">
    <property type="term" value="C:plasma membrane"/>
    <property type="evidence" value="ECO:0007669"/>
    <property type="project" value="UniProtKB-SubCell"/>
</dbReference>
<dbReference type="GO" id="GO:0005524">
    <property type="term" value="F:ATP binding"/>
    <property type="evidence" value="ECO:0007669"/>
    <property type="project" value="UniProtKB-KW"/>
</dbReference>
<dbReference type="GO" id="GO:0016887">
    <property type="term" value="F:ATP hydrolysis activity"/>
    <property type="evidence" value="ECO:0007669"/>
    <property type="project" value="InterPro"/>
</dbReference>
<dbReference type="GO" id="GO:0022857">
    <property type="term" value="F:transmembrane transporter activity"/>
    <property type="evidence" value="ECO:0007669"/>
    <property type="project" value="TreeGrafter"/>
</dbReference>
<dbReference type="GO" id="GO:0042908">
    <property type="term" value="P:xenobiotic transport"/>
    <property type="evidence" value="ECO:0000250"/>
    <property type="project" value="GO_Central"/>
</dbReference>
<dbReference type="CDD" id="cd03255">
    <property type="entry name" value="ABC_MJ0796_LolCDE_FtsE"/>
    <property type="match status" value="1"/>
</dbReference>
<dbReference type="FunFam" id="3.40.50.300:FF:000032">
    <property type="entry name" value="Export ABC transporter ATP-binding protein"/>
    <property type="match status" value="1"/>
</dbReference>
<dbReference type="Gene3D" id="3.40.50.300">
    <property type="entry name" value="P-loop containing nucleotide triphosphate hydrolases"/>
    <property type="match status" value="1"/>
</dbReference>
<dbReference type="InterPro" id="IPR003593">
    <property type="entry name" value="AAA+_ATPase"/>
</dbReference>
<dbReference type="InterPro" id="IPR003838">
    <property type="entry name" value="ABC3_permease_C"/>
</dbReference>
<dbReference type="InterPro" id="IPR003439">
    <property type="entry name" value="ABC_transporter-like_ATP-bd"/>
</dbReference>
<dbReference type="InterPro" id="IPR017871">
    <property type="entry name" value="ABC_transporter-like_CS"/>
</dbReference>
<dbReference type="InterPro" id="IPR017911">
    <property type="entry name" value="MacB-like_ATP-bd"/>
</dbReference>
<dbReference type="InterPro" id="IPR025857">
    <property type="entry name" value="MacB_PCD"/>
</dbReference>
<dbReference type="InterPro" id="IPR050250">
    <property type="entry name" value="Macrolide_Exporter_MacB"/>
</dbReference>
<dbReference type="InterPro" id="IPR027417">
    <property type="entry name" value="P-loop_NTPase"/>
</dbReference>
<dbReference type="PANTHER" id="PTHR30572:SF7">
    <property type="entry name" value="MACROLIDE EXPORT ATP-BINDING_PERMEASE PROTEIN MACB"/>
    <property type="match status" value="1"/>
</dbReference>
<dbReference type="PANTHER" id="PTHR30572">
    <property type="entry name" value="MEMBRANE COMPONENT OF TRANSPORTER-RELATED"/>
    <property type="match status" value="1"/>
</dbReference>
<dbReference type="Pfam" id="PF00005">
    <property type="entry name" value="ABC_tran"/>
    <property type="match status" value="1"/>
</dbReference>
<dbReference type="Pfam" id="PF02687">
    <property type="entry name" value="FtsX"/>
    <property type="match status" value="1"/>
</dbReference>
<dbReference type="Pfam" id="PF12704">
    <property type="entry name" value="MacB_PCD"/>
    <property type="match status" value="1"/>
</dbReference>
<dbReference type="SMART" id="SM00382">
    <property type="entry name" value="AAA"/>
    <property type="match status" value="1"/>
</dbReference>
<dbReference type="SUPFAM" id="SSF52540">
    <property type="entry name" value="P-loop containing nucleoside triphosphate hydrolases"/>
    <property type="match status" value="1"/>
</dbReference>
<dbReference type="PROSITE" id="PS00211">
    <property type="entry name" value="ABC_TRANSPORTER_1"/>
    <property type="match status" value="1"/>
</dbReference>
<dbReference type="PROSITE" id="PS50893">
    <property type="entry name" value="ABC_TRANSPORTER_2"/>
    <property type="match status" value="1"/>
</dbReference>
<dbReference type="PROSITE" id="PS51267">
    <property type="entry name" value="MACB"/>
    <property type="match status" value="1"/>
</dbReference>
<protein>
    <recommendedName>
        <fullName evidence="7">Probable syringafactin export ATP-binding/permease protein SyfD</fullName>
        <ecNumber evidence="7">7.6.2.-</ecNumber>
    </recommendedName>
</protein>
<comment type="function">
    <text evidence="8">Probably involved in the export of syringafactins.</text>
</comment>
<comment type="subunit">
    <text evidence="1">Probably part of a tripartite efflux system, which is composed of an inner membrane transporter, a periplasmic membrane fusion protein, and an outer membrane component.</text>
</comment>
<comment type="subcellular location">
    <subcellularLocation>
        <location evidence="1">Cell inner membrane</location>
        <topology evidence="2">Multi-pass membrane protein</topology>
    </subcellularLocation>
</comment>
<comment type="induction">
    <text evidence="5">Part of a gene cluster involved in the production of six structurally related linear lipopeptides, called syringafactins.</text>
</comment>
<comment type="similarity">
    <text evidence="7">Belongs to the ABC transporter superfamily. Macrolide exporter (TC 3.A.1.122) family.</text>
</comment>